<feature type="chain" id="PRO_0000087639" description="Omega-ctenitoxin-Pr1a" evidence="2 3">
    <location>
        <begin position="1"/>
        <end position="43"/>
    </location>
</feature>
<feature type="modified residue" description="Glycine amide" evidence="2 3">
    <location>
        <position position="43"/>
    </location>
</feature>
<feature type="disulfide bond" evidence="1">
    <location>
        <begin position="2"/>
        <end position="17"/>
    </location>
</feature>
<feature type="disulfide bond" evidence="1">
    <location>
        <begin position="9"/>
        <end position="22"/>
    </location>
</feature>
<feature type="disulfide bond" evidence="1">
    <location>
        <begin position="16"/>
        <end position="33"/>
    </location>
</feature>
<feature type="disulfide bond" evidence="1">
    <location>
        <begin position="24"/>
        <end position="31"/>
    </location>
</feature>
<sequence length="43" mass="4640">ACAGLYKKCGKGVNTCCENRPCKCDLAMGNCICKKKFVEFFGG</sequence>
<evidence type="ECO:0000250" key="1">
    <source>
        <dbReference type="UniProtKB" id="P30288"/>
    </source>
</evidence>
<evidence type="ECO:0000269" key="2">
    <source>
    </source>
</evidence>
<evidence type="ECO:0000269" key="3">
    <source>
    </source>
</evidence>
<evidence type="ECO:0000305" key="4"/>
<evidence type="ECO:0000305" key="5">
    <source>
    </source>
</evidence>
<evidence type="ECO:0000305" key="6">
    <source>
    </source>
</evidence>
<dbReference type="SMR" id="P83911"/>
<dbReference type="ArachnoServer" id="AS000270">
    <property type="toxin name" value="omega-ctenitoxin-Pr1a"/>
</dbReference>
<dbReference type="GO" id="GO:0005576">
    <property type="term" value="C:extracellular region"/>
    <property type="evidence" value="ECO:0007669"/>
    <property type="project" value="UniProtKB-SubCell"/>
</dbReference>
<dbReference type="GO" id="GO:0005246">
    <property type="term" value="F:calcium channel regulator activity"/>
    <property type="evidence" value="ECO:0007669"/>
    <property type="project" value="UniProtKB-KW"/>
</dbReference>
<dbReference type="GO" id="GO:0008200">
    <property type="term" value="F:ion channel inhibitor activity"/>
    <property type="evidence" value="ECO:0007669"/>
    <property type="project" value="InterPro"/>
</dbReference>
<dbReference type="GO" id="GO:0090729">
    <property type="term" value="F:toxin activity"/>
    <property type="evidence" value="ECO:0007669"/>
    <property type="project" value="UniProtKB-KW"/>
</dbReference>
<dbReference type="CDD" id="cd12960">
    <property type="entry name" value="Spider_toxin"/>
    <property type="match status" value="1"/>
</dbReference>
<dbReference type="Gene3D" id="4.10.40.10">
    <property type="match status" value="1"/>
</dbReference>
<dbReference type="InterPro" id="IPR004169">
    <property type="entry name" value="Spidertoxin"/>
</dbReference>
<dbReference type="Pfam" id="PF02819">
    <property type="entry name" value="Toxin_9"/>
    <property type="match status" value="1"/>
</dbReference>
<dbReference type="SUPFAM" id="SSF57059">
    <property type="entry name" value="omega toxin-like"/>
    <property type="match status" value="1"/>
</dbReference>
<accession>P83911</accession>
<comment type="function">
    <text evidence="3">Inhibits high-voltage activated calcium channels. Shifts the voltage-dependence for activation towards hyperpolarized membrane potentials for L- (Cav1), P/Q- (Cav2.1/CACNA1A) and R-type (Cav2.3/CACNA1E) calcium currents. Causes immediate agitation and clockwise gyration, followed by the gradual development of general flaccid paralysis when injected intracerebroventricular into mice at dose levels of 5 ug per mouse.</text>
</comment>
<comment type="subcellular location">
    <subcellularLocation>
        <location evidence="2 3">Secreted</location>
    </subcellularLocation>
</comment>
<comment type="tissue specificity">
    <text evidence="5 6">Expressed by the venom gland.</text>
</comment>
<comment type="domain">
    <text evidence="1">The presence of a 'disulfide through disulfide knot' structurally defines this protein as a knottin.</text>
</comment>
<comment type="mass spectrometry" mass="4627.26" error="0.3" method="Electrospray" evidence="3 4"/>
<comment type="mass spectrometry" mass="4627.9" method="Unknown" evidence="2 4"/>
<comment type="similarity">
    <text evidence="4">Belongs to the neurotoxin 02 (plectoxin) family.</text>
</comment>
<keyword id="KW-0027">Amidation</keyword>
<keyword id="KW-0108">Calcium channel impairing toxin</keyword>
<keyword id="KW-0903">Direct protein sequencing</keyword>
<keyword id="KW-1015">Disulfide bond</keyword>
<keyword id="KW-0872">Ion channel impairing toxin</keyword>
<keyword id="KW-0960">Knottin</keyword>
<keyword id="KW-0528">Neurotoxin</keyword>
<keyword id="KW-0964">Secreted</keyword>
<keyword id="KW-0800">Toxin</keyword>
<keyword id="KW-1218">Voltage-gated calcium channel impairing toxin</keyword>
<proteinExistence type="evidence at protein level"/>
<protein>
    <recommendedName>
        <fullName evidence="4">Omega-ctenitoxin-Pr1a</fullName>
        <shortName evidence="4">Omega-CNTX-Pr1a</shortName>
    </recommendedName>
    <alternativeName>
        <fullName>Neurotoxin PRTx17C3</fullName>
    </alternativeName>
    <alternativeName>
        <fullName>Neurotoxin PRTx3-7</fullName>
        <shortName>Tx3-7</shortName>
    </alternativeName>
</protein>
<reference key="1">
    <citation type="journal article" date="2006" name="Comp. Biochem. Physiol.">
        <title>Comparison of the partial proteomes of the venoms of Brazilian spiders of the genus Phoneutria.</title>
        <authorList>
            <person name="Richardson M."/>
            <person name="Pimenta A.M."/>
            <person name="Bemquerer M.P."/>
            <person name="Santoro M.M."/>
            <person name="Beirao P.S."/>
            <person name="Lima M.E."/>
            <person name="Figueiredo S.G."/>
            <person name="Bloch C. Jr."/>
            <person name="Vasconcelos E.A."/>
            <person name="Campos F.A."/>
            <person name="Gomes P.C."/>
            <person name="Cordeiro M.N."/>
        </authorList>
    </citation>
    <scope>PROTEIN SEQUENCE</scope>
    <scope>SUBCELLULAR LOCATION</scope>
    <scope>MASS SPECTROMETRY</scope>
    <scope>AMIDATION AT GLY-43</scope>
    <source>
        <tissue>Venom</tissue>
    </source>
</reference>
<reference key="2">
    <citation type="journal article" date="2007" name="Cell. Mol. Neurobiol.">
        <title>Leftward shift in the voltage-dependence for Ca(2+) currents activation induced by a new toxin from Phoneutria reidyi (Aranae, ctenidae) Venom.</title>
        <authorList>
            <person name="Vieira L.B."/>
            <person name="Pimenta A.M.C."/>
            <person name="Richardson M."/>
            <person name="Bemquerer M.P."/>
            <person name="Reis H.J."/>
            <person name="Cruz J.S."/>
            <person name="Gomez M.V."/>
            <person name="Santoro M.M."/>
            <person name="Ferreira-de-Oliveira R."/>
            <person name="Figueiredo S.G."/>
            <person name="Snutch T.P."/>
            <person name="Cordeiro M.N."/>
        </authorList>
    </citation>
    <scope>PROTEIN SEQUENCE</scope>
    <scope>FUNCTION</scope>
    <scope>SUBCELLULAR LOCATION</scope>
    <scope>AMIDATION AT GLY-43</scope>
    <scope>MASS SPECTROMETRY</scope>
    <source>
        <tissue>Venom</tissue>
    </source>
</reference>
<name>TX20A_PHORI</name>
<organism evidence="4">
    <name type="scientific">Phoneutria reidyi</name>
    <name type="common">Brazilian Amazonian armed spider</name>
    <name type="synonym">Ctenus reidyi</name>
    <dbReference type="NCBI Taxonomy" id="272752"/>
    <lineage>
        <taxon>Eukaryota</taxon>
        <taxon>Metazoa</taxon>
        <taxon>Ecdysozoa</taxon>
        <taxon>Arthropoda</taxon>
        <taxon>Chelicerata</taxon>
        <taxon>Arachnida</taxon>
        <taxon>Araneae</taxon>
        <taxon>Araneomorphae</taxon>
        <taxon>Entelegynae</taxon>
        <taxon>Lycosoidea</taxon>
        <taxon>Ctenidae</taxon>
        <taxon>Phoneutria</taxon>
    </lineage>
</organism>